<accession>Q8FCY0</accession>
<sequence length="601" mass="66463">MEGSDFLLAGVLFLFAAVAAVPLASRLGIGAVLGYLLAGIAIGPWGLGFISDVDEILHFSELGVVFLMFIIGLELNPSKLWQLRRSIFGVGAAQVLLSAALLAGLLMLTHFSWQAAVVGGIGLAMSSTAMALQLMREKGMNRSESGQLGFSVLLFQDLAVIPALALVPLLAGSADEHFDWMKIGMKVLAFVGMLIGGRYLLRPVFRFIAASGVREVFTAATLLLVLGSALFMDALGLSMALGTFIAGVLLAESEYRHELETAIDPFKGLLLGLFFISVGMSLNLGVLYTHLLWVVISVVVLVAVKILVLYLLARLYGVRSSERMQFAGVLSQGGEFAFVLFSTASSQRLFQGDQMALLLVTVTLSMMTTPLLMKLVDKWLSRQFNGPEEEDEKPWVNDDKPQVIVVGFGRFGQVIGRLLMANKMRITVLERDISAVNLMRKYGYKVYYGDATQVDLLRSAGAEAAESIVITCNEPEDTMKLVEICQQHFPHLHILARARGRVEAHELLQAGVTQFSRETFSSALELGRKTLVTLGMHPHQAQRAQLHFRRLDMRMLRELIPMHADTVQISRAREARRELEEIFQREMQQERRQLDGWDEFE</sequence>
<protein>
    <recommendedName>
        <fullName evidence="1">Glutathione-regulated potassium-efflux system protein KefB</fullName>
    </recommendedName>
    <alternativeName>
        <fullName evidence="1">K(+)/H(+) antiporter</fullName>
    </alternativeName>
</protein>
<feature type="chain" id="PRO_0000196597" description="Glutathione-regulated potassium-efflux system protein KefB">
    <location>
        <begin position="1"/>
        <end position="601"/>
    </location>
</feature>
<feature type="transmembrane region" description="Helical" evidence="1">
    <location>
        <begin position="4"/>
        <end position="24"/>
    </location>
</feature>
<feature type="transmembrane region" description="Helical" evidence="1">
    <location>
        <begin position="29"/>
        <end position="49"/>
    </location>
</feature>
<feature type="transmembrane region" description="Helical" evidence="1">
    <location>
        <begin position="55"/>
        <end position="75"/>
    </location>
</feature>
<feature type="transmembrane region" description="Helical" evidence="1">
    <location>
        <begin position="87"/>
        <end position="107"/>
    </location>
</feature>
<feature type="transmembrane region" description="Helical" evidence="1">
    <location>
        <begin position="115"/>
        <end position="135"/>
    </location>
</feature>
<feature type="transmembrane region" description="Helical" evidence="1">
    <location>
        <begin position="152"/>
        <end position="172"/>
    </location>
</feature>
<feature type="transmembrane region" description="Helical" evidence="1">
    <location>
        <begin position="177"/>
        <end position="197"/>
    </location>
</feature>
<feature type="transmembrane region" description="Helical" evidence="1">
    <location>
        <begin position="207"/>
        <end position="227"/>
    </location>
</feature>
<feature type="transmembrane region" description="Helical" evidence="1">
    <location>
        <begin position="230"/>
        <end position="250"/>
    </location>
</feature>
<feature type="transmembrane region" description="Helical" evidence="1">
    <location>
        <begin position="268"/>
        <end position="288"/>
    </location>
</feature>
<feature type="transmembrane region" description="Helical" evidence="1">
    <location>
        <begin position="291"/>
        <end position="311"/>
    </location>
</feature>
<feature type="transmembrane region" description="Helical" evidence="1">
    <location>
        <begin position="324"/>
        <end position="344"/>
    </location>
</feature>
<feature type="transmembrane region" description="Helical" evidence="1">
    <location>
        <begin position="356"/>
        <end position="376"/>
    </location>
</feature>
<feature type="domain" description="RCK N-terminal" evidence="2">
    <location>
        <begin position="400"/>
        <end position="519"/>
    </location>
</feature>
<organism>
    <name type="scientific">Escherichia coli O6:H1 (strain CFT073 / ATCC 700928 / UPEC)</name>
    <dbReference type="NCBI Taxonomy" id="199310"/>
    <lineage>
        <taxon>Bacteria</taxon>
        <taxon>Pseudomonadati</taxon>
        <taxon>Pseudomonadota</taxon>
        <taxon>Gammaproteobacteria</taxon>
        <taxon>Enterobacterales</taxon>
        <taxon>Enterobacteriaceae</taxon>
        <taxon>Escherichia</taxon>
    </lineage>
</organism>
<gene>
    <name evidence="1" type="primary">kefB</name>
    <name type="ordered locus">c4125</name>
</gene>
<comment type="function">
    <text evidence="1">Pore-forming subunit of a potassium efflux system that confers protection against electrophiles. Catalyzes K(+)/H(+) antiport.</text>
</comment>
<comment type="subunit">
    <text evidence="1">Interacts with the regulatory subunit KefG.</text>
</comment>
<comment type="subcellular location">
    <subcellularLocation>
        <location evidence="1">Cell inner membrane</location>
        <topology evidence="1">Multi-pass membrane protein</topology>
    </subcellularLocation>
</comment>
<comment type="similarity">
    <text evidence="1">Belongs to the monovalent cation:proton antiporter 2 (CPA2) transporter (TC 2.A.37) family. KefB subfamily.</text>
</comment>
<name>KEFB_ECOL6</name>
<proteinExistence type="inferred from homology"/>
<keyword id="KW-0050">Antiport</keyword>
<keyword id="KW-0997">Cell inner membrane</keyword>
<keyword id="KW-1003">Cell membrane</keyword>
<keyword id="KW-0406">Ion transport</keyword>
<keyword id="KW-0472">Membrane</keyword>
<keyword id="KW-0630">Potassium</keyword>
<keyword id="KW-0633">Potassium transport</keyword>
<keyword id="KW-1185">Reference proteome</keyword>
<keyword id="KW-0812">Transmembrane</keyword>
<keyword id="KW-1133">Transmembrane helix</keyword>
<keyword id="KW-0813">Transport</keyword>
<evidence type="ECO:0000255" key="1">
    <source>
        <dbReference type="HAMAP-Rule" id="MF_01412"/>
    </source>
</evidence>
<evidence type="ECO:0000255" key="2">
    <source>
        <dbReference type="PROSITE-ProRule" id="PRU00543"/>
    </source>
</evidence>
<reference key="1">
    <citation type="journal article" date="2002" name="Proc. Natl. Acad. Sci. U.S.A.">
        <title>Extensive mosaic structure revealed by the complete genome sequence of uropathogenic Escherichia coli.</title>
        <authorList>
            <person name="Welch R.A."/>
            <person name="Burland V."/>
            <person name="Plunkett G. III"/>
            <person name="Redford P."/>
            <person name="Roesch P."/>
            <person name="Rasko D."/>
            <person name="Buckles E.L."/>
            <person name="Liou S.-R."/>
            <person name="Boutin A."/>
            <person name="Hackett J."/>
            <person name="Stroud D."/>
            <person name="Mayhew G.F."/>
            <person name="Rose D.J."/>
            <person name="Zhou S."/>
            <person name="Schwartz D.C."/>
            <person name="Perna N.T."/>
            <person name="Mobley H.L.T."/>
            <person name="Donnenberg M.S."/>
            <person name="Blattner F.R."/>
        </authorList>
    </citation>
    <scope>NUCLEOTIDE SEQUENCE [LARGE SCALE GENOMIC DNA]</scope>
    <source>
        <strain>CFT073 / ATCC 700928 / UPEC</strain>
    </source>
</reference>
<dbReference type="EMBL" id="AE014075">
    <property type="protein sequence ID" value="AAN82563.1"/>
    <property type="molecule type" value="Genomic_DNA"/>
</dbReference>
<dbReference type="RefSeq" id="WP_000399162.1">
    <property type="nucleotide sequence ID" value="NZ_CP051263.1"/>
</dbReference>
<dbReference type="SMR" id="Q8FCY0"/>
<dbReference type="STRING" id="199310.c4125"/>
<dbReference type="KEGG" id="ecc:c4125"/>
<dbReference type="eggNOG" id="COG0475">
    <property type="taxonomic scope" value="Bacteria"/>
</dbReference>
<dbReference type="eggNOG" id="COG1226">
    <property type="taxonomic scope" value="Bacteria"/>
</dbReference>
<dbReference type="HOGENOM" id="CLU_005126_9_3_6"/>
<dbReference type="BioCyc" id="ECOL199310:C4125-MONOMER"/>
<dbReference type="Proteomes" id="UP000001410">
    <property type="component" value="Chromosome"/>
</dbReference>
<dbReference type="GO" id="GO:0005886">
    <property type="term" value="C:plasma membrane"/>
    <property type="evidence" value="ECO:0007669"/>
    <property type="project" value="UniProtKB-SubCell"/>
</dbReference>
<dbReference type="GO" id="GO:0015503">
    <property type="term" value="F:glutathione-regulated potassium exporter activity"/>
    <property type="evidence" value="ECO:0007669"/>
    <property type="project" value="UniProtKB-UniRule"/>
</dbReference>
<dbReference type="GO" id="GO:1902600">
    <property type="term" value="P:proton transmembrane transport"/>
    <property type="evidence" value="ECO:0007669"/>
    <property type="project" value="InterPro"/>
</dbReference>
<dbReference type="FunFam" id="1.20.1530.20:FF:000001">
    <property type="entry name" value="Glutathione-regulated potassium-efflux system protein KefB"/>
    <property type="match status" value="1"/>
</dbReference>
<dbReference type="FunFam" id="3.40.50.720:FF:000036">
    <property type="entry name" value="Glutathione-regulated potassium-efflux system protein KefB"/>
    <property type="match status" value="1"/>
</dbReference>
<dbReference type="Gene3D" id="1.20.1530.20">
    <property type="match status" value="1"/>
</dbReference>
<dbReference type="Gene3D" id="3.40.50.720">
    <property type="entry name" value="NAD(P)-binding Rossmann-like Domain"/>
    <property type="match status" value="1"/>
</dbReference>
<dbReference type="HAMAP" id="MF_01412">
    <property type="entry name" value="K_H_efflux_KefB"/>
    <property type="match status" value="1"/>
</dbReference>
<dbReference type="InterPro" id="IPR006153">
    <property type="entry name" value="Cation/H_exchanger_TM"/>
</dbReference>
<dbReference type="InterPro" id="IPR004771">
    <property type="entry name" value="K/H_exchanger"/>
</dbReference>
<dbReference type="InterPro" id="IPR020884">
    <property type="entry name" value="K_H_efflux_KefB"/>
</dbReference>
<dbReference type="InterPro" id="IPR038770">
    <property type="entry name" value="Na+/solute_symporter_sf"/>
</dbReference>
<dbReference type="InterPro" id="IPR036291">
    <property type="entry name" value="NAD(P)-bd_dom_sf"/>
</dbReference>
<dbReference type="InterPro" id="IPR003148">
    <property type="entry name" value="RCK_N"/>
</dbReference>
<dbReference type="NCBIfam" id="TIGR00932">
    <property type="entry name" value="2a37"/>
    <property type="match status" value="1"/>
</dbReference>
<dbReference type="NCBIfam" id="NF002973">
    <property type="entry name" value="PRK03659.1"/>
    <property type="match status" value="1"/>
</dbReference>
<dbReference type="PANTHER" id="PTHR46157">
    <property type="entry name" value="K(+) EFFLUX ANTIPORTER 3, CHLOROPLASTIC"/>
    <property type="match status" value="1"/>
</dbReference>
<dbReference type="PANTHER" id="PTHR46157:SF4">
    <property type="entry name" value="K(+) EFFLUX ANTIPORTER 3, CHLOROPLASTIC"/>
    <property type="match status" value="1"/>
</dbReference>
<dbReference type="Pfam" id="PF00999">
    <property type="entry name" value="Na_H_Exchanger"/>
    <property type="match status" value="1"/>
</dbReference>
<dbReference type="Pfam" id="PF02254">
    <property type="entry name" value="TrkA_N"/>
    <property type="match status" value="1"/>
</dbReference>
<dbReference type="SUPFAM" id="SSF51735">
    <property type="entry name" value="NAD(P)-binding Rossmann-fold domains"/>
    <property type="match status" value="1"/>
</dbReference>
<dbReference type="PROSITE" id="PS51201">
    <property type="entry name" value="RCK_N"/>
    <property type="match status" value="1"/>
</dbReference>